<sequence length="49" mass="5364">MGKRKANHTISGMNAASAQGQGAGYNEEFANENLTAAERQNNKKRKKNQ</sequence>
<protein>
    <recommendedName>
        <fullName evidence="1">Small, acid-soluble spore protein O</fullName>
        <shortName evidence="1">SASP O</shortName>
    </recommendedName>
</protein>
<name>SSPO_BACC7</name>
<gene>
    <name evidence="1" type="primary">sspO</name>
    <name type="ordered locus">BCAH187_A3641</name>
</gene>
<organism>
    <name type="scientific">Bacillus cereus (strain AH187)</name>
    <dbReference type="NCBI Taxonomy" id="405534"/>
    <lineage>
        <taxon>Bacteria</taxon>
        <taxon>Bacillati</taxon>
        <taxon>Bacillota</taxon>
        <taxon>Bacilli</taxon>
        <taxon>Bacillales</taxon>
        <taxon>Bacillaceae</taxon>
        <taxon>Bacillus</taxon>
        <taxon>Bacillus cereus group</taxon>
    </lineage>
</organism>
<keyword id="KW-0749">Sporulation</keyword>
<feature type="chain" id="PRO_1000131500" description="Small, acid-soluble spore protein O">
    <location>
        <begin position="1"/>
        <end position="49"/>
    </location>
</feature>
<feature type="region of interest" description="Disordered" evidence="2">
    <location>
        <begin position="1"/>
        <end position="49"/>
    </location>
</feature>
<feature type="compositionally biased region" description="Polar residues" evidence="2">
    <location>
        <begin position="8"/>
        <end position="20"/>
    </location>
</feature>
<comment type="subcellular location">
    <subcellularLocation>
        <location evidence="1">Spore core</location>
    </subcellularLocation>
</comment>
<comment type="induction">
    <text evidence="1">Expressed only in the forespore compartment of sporulating cells.</text>
</comment>
<comment type="similarity">
    <text evidence="1">Belongs to the SspO family.</text>
</comment>
<proteinExistence type="inferred from homology"/>
<reference key="1">
    <citation type="submission" date="2008-10" db="EMBL/GenBank/DDBJ databases">
        <title>Genome sequence of Bacillus cereus AH187.</title>
        <authorList>
            <person name="Dodson R.J."/>
            <person name="Durkin A.S."/>
            <person name="Rosovitz M.J."/>
            <person name="Rasko D.A."/>
            <person name="Kolsto A.B."/>
            <person name="Okstad O.A."/>
            <person name="Ravel J."/>
            <person name="Sutton G."/>
        </authorList>
    </citation>
    <scope>NUCLEOTIDE SEQUENCE [LARGE SCALE GENOMIC DNA]</scope>
    <source>
        <strain>AH187</strain>
    </source>
</reference>
<dbReference type="EMBL" id="CP001177">
    <property type="protein sequence ID" value="ACJ77892.1"/>
    <property type="molecule type" value="Genomic_DNA"/>
</dbReference>
<dbReference type="KEGG" id="bcr:BCAH187_A3641"/>
<dbReference type="HOGENOM" id="CLU_206342_0_0_9"/>
<dbReference type="Proteomes" id="UP000002214">
    <property type="component" value="Chromosome"/>
</dbReference>
<dbReference type="GO" id="GO:0042601">
    <property type="term" value="C:endospore-forming forespore"/>
    <property type="evidence" value="ECO:0007669"/>
    <property type="project" value="InterPro"/>
</dbReference>
<dbReference type="GO" id="GO:0030436">
    <property type="term" value="P:asexual sporulation"/>
    <property type="evidence" value="ECO:0007669"/>
    <property type="project" value="UniProtKB-UniRule"/>
</dbReference>
<dbReference type="GO" id="GO:0030435">
    <property type="term" value="P:sporulation resulting in formation of a cellular spore"/>
    <property type="evidence" value="ECO:0007669"/>
    <property type="project" value="UniProtKB-KW"/>
</dbReference>
<dbReference type="HAMAP" id="MF_00665">
    <property type="entry name" value="SspO"/>
    <property type="match status" value="1"/>
</dbReference>
<dbReference type="InterPro" id="IPR012613">
    <property type="entry name" value="SASP_SspO"/>
</dbReference>
<dbReference type="NCBIfam" id="TIGR02864">
    <property type="entry name" value="spore_sspO"/>
    <property type="match status" value="1"/>
</dbReference>
<dbReference type="Pfam" id="PF08175">
    <property type="entry name" value="SspO"/>
    <property type="match status" value="1"/>
</dbReference>
<accession>B7I063</accession>
<evidence type="ECO:0000255" key="1">
    <source>
        <dbReference type="HAMAP-Rule" id="MF_00665"/>
    </source>
</evidence>
<evidence type="ECO:0000256" key="2">
    <source>
        <dbReference type="SAM" id="MobiDB-lite"/>
    </source>
</evidence>